<gene>
    <name evidence="1" type="primary">murG</name>
    <name type="ordered locus">Teth514_2009</name>
</gene>
<sequence length="364" mass="40357">MKYLFAGGGTGGHIYPAIAIAKEILKNEKNAQILFVGTKKGLENELVPREGFELKTITVQGFKRKLSLDTLKTIYKAMVGLKEANNILNEFKPDVVIGTGGYVCGPVLMMAALKGIPTLIHEQNAFPGLTNKVLSRFVKVVAVSFEESVKYFKNKEKVVVTGNPIRRELLKVTKEEGLKNLGFYSDKPLIVSVGGSRGAEKINFTMVEFLKQKDKNLQVLIITGANQYEKVLEKVKTETIDIDETVKIIPYCHNMQDVYAAADIIICRAGAITLAEITAKGVASILIPSPYVANNHQEYNARVLEKAGASYVILEKDLTAEKLYKKIKYLLDNPQVLSKMRDNAQKISKIDAAEKIYKLIKSIT</sequence>
<protein>
    <recommendedName>
        <fullName evidence="1">UDP-N-acetylglucosamine--N-acetylmuramyl-(pentapeptide) pyrophosphoryl-undecaprenol N-acetylglucosamine transferase</fullName>
        <ecNumber evidence="1">2.4.1.227</ecNumber>
    </recommendedName>
    <alternativeName>
        <fullName evidence="1">Undecaprenyl-PP-MurNAc-pentapeptide-UDPGlcNAc GlcNAc transferase</fullName>
    </alternativeName>
</protein>
<keyword id="KW-0131">Cell cycle</keyword>
<keyword id="KW-0132">Cell division</keyword>
<keyword id="KW-1003">Cell membrane</keyword>
<keyword id="KW-0133">Cell shape</keyword>
<keyword id="KW-0961">Cell wall biogenesis/degradation</keyword>
<keyword id="KW-0328">Glycosyltransferase</keyword>
<keyword id="KW-0472">Membrane</keyword>
<keyword id="KW-0573">Peptidoglycan synthesis</keyword>
<keyword id="KW-0808">Transferase</keyword>
<name>MURG_THEPX</name>
<comment type="function">
    <text evidence="1">Cell wall formation. Catalyzes the transfer of a GlcNAc subunit on undecaprenyl-pyrophosphoryl-MurNAc-pentapeptide (lipid intermediate I) to form undecaprenyl-pyrophosphoryl-MurNAc-(pentapeptide)GlcNAc (lipid intermediate II).</text>
</comment>
<comment type="catalytic activity">
    <reaction evidence="1">
        <text>di-trans,octa-cis-undecaprenyl diphospho-N-acetyl-alpha-D-muramoyl-L-alanyl-D-glutamyl-meso-2,6-diaminopimeloyl-D-alanyl-D-alanine + UDP-N-acetyl-alpha-D-glucosamine = di-trans,octa-cis-undecaprenyl diphospho-[N-acetyl-alpha-D-glucosaminyl-(1-&gt;4)]-N-acetyl-alpha-D-muramoyl-L-alanyl-D-glutamyl-meso-2,6-diaminopimeloyl-D-alanyl-D-alanine + UDP + H(+)</text>
        <dbReference type="Rhea" id="RHEA:31227"/>
        <dbReference type="ChEBI" id="CHEBI:15378"/>
        <dbReference type="ChEBI" id="CHEBI:57705"/>
        <dbReference type="ChEBI" id="CHEBI:58223"/>
        <dbReference type="ChEBI" id="CHEBI:61387"/>
        <dbReference type="ChEBI" id="CHEBI:61388"/>
        <dbReference type="EC" id="2.4.1.227"/>
    </reaction>
</comment>
<comment type="pathway">
    <text evidence="1">Cell wall biogenesis; peptidoglycan biosynthesis.</text>
</comment>
<comment type="subcellular location">
    <subcellularLocation>
        <location evidence="1">Cell membrane</location>
        <topology evidence="1">Peripheral membrane protein</topology>
        <orientation evidence="1">Cytoplasmic side</orientation>
    </subcellularLocation>
</comment>
<comment type="similarity">
    <text evidence="1">Belongs to the glycosyltransferase 28 family. MurG subfamily.</text>
</comment>
<evidence type="ECO:0000255" key="1">
    <source>
        <dbReference type="HAMAP-Rule" id="MF_00033"/>
    </source>
</evidence>
<reference key="1">
    <citation type="submission" date="2008-01" db="EMBL/GenBank/DDBJ databases">
        <title>Complete sequence of Thermoanaerobacter sp. X514.</title>
        <authorList>
            <consortium name="US DOE Joint Genome Institute"/>
            <person name="Copeland A."/>
            <person name="Lucas S."/>
            <person name="Lapidus A."/>
            <person name="Barry K."/>
            <person name="Glavina del Rio T."/>
            <person name="Dalin E."/>
            <person name="Tice H."/>
            <person name="Pitluck S."/>
            <person name="Bruce D."/>
            <person name="Goodwin L."/>
            <person name="Saunders E."/>
            <person name="Brettin T."/>
            <person name="Detter J.C."/>
            <person name="Han C."/>
            <person name="Schmutz J."/>
            <person name="Larimer F."/>
            <person name="Land M."/>
            <person name="Hauser L."/>
            <person name="Kyrpides N."/>
            <person name="Kim E."/>
            <person name="Hemme C."/>
            <person name="Fields M.W."/>
            <person name="He Z."/>
            <person name="Zhou J."/>
            <person name="Richardson P."/>
        </authorList>
    </citation>
    <scope>NUCLEOTIDE SEQUENCE [LARGE SCALE GENOMIC DNA]</scope>
    <source>
        <strain>X514</strain>
    </source>
</reference>
<proteinExistence type="inferred from homology"/>
<feature type="chain" id="PRO_1000090481" description="UDP-N-acetylglucosamine--N-acetylmuramyl-(pentapeptide) pyrophosphoryl-undecaprenol N-acetylglucosamine transferase">
    <location>
        <begin position="1"/>
        <end position="364"/>
    </location>
</feature>
<feature type="binding site" evidence="1">
    <location>
        <begin position="10"/>
        <end position="12"/>
    </location>
    <ligand>
        <name>UDP-N-acetyl-alpha-D-glucosamine</name>
        <dbReference type="ChEBI" id="CHEBI:57705"/>
    </ligand>
</feature>
<feature type="binding site" evidence="1">
    <location>
        <position position="124"/>
    </location>
    <ligand>
        <name>UDP-N-acetyl-alpha-D-glucosamine</name>
        <dbReference type="ChEBI" id="CHEBI:57705"/>
    </ligand>
</feature>
<feature type="binding site" evidence="1">
    <location>
        <position position="166"/>
    </location>
    <ligand>
        <name>UDP-N-acetyl-alpha-D-glucosamine</name>
        <dbReference type="ChEBI" id="CHEBI:57705"/>
    </ligand>
</feature>
<feature type="binding site" evidence="1">
    <location>
        <position position="196"/>
    </location>
    <ligand>
        <name>UDP-N-acetyl-alpha-D-glucosamine</name>
        <dbReference type="ChEBI" id="CHEBI:57705"/>
    </ligand>
</feature>
<feature type="binding site" evidence="1">
    <location>
        <position position="297"/>
    </location>
    <ligand>
        <name>UDP-N-acetyl-alpha-D-glucosamine</name>
        <dbReference type="ChEBI" id="CHEBI:57705"/>
    </ligand>
</feature>
<dbReference type="EC" id="2.4.1.227" evidence="1"/>
<dbReference type="EMBL" id="CP000923">
    <property type="protein sequence ID" value="ABY93281.1"/>
    <property type="molecule type" value="Genomic_DNA"/>
</dbReference>
<dbReference type="RefSeq" id="WP_009052546.1">
    <property type="nucleotide sequence ID" value="NC_010320.1"/>
</dbReference>
<dbReference type="SMR" id="B0K3H0"/>
<dbReference type="CAZy" id="GT28">
    <property type="family name" value="Glycosyltransferase Family 28"/>
</dbReference>
<dbReference type="KEGG" id="tex:Teth514_2009"/>
<dbReference type="HOGENOM" id="CLU_037404_0_1_9"/>
<dbReference type="UniPathway" id="UPA00219"/>
<dbReference type="Proteomes" id="UP000002155">
    <property type="component" value="Chromosome"/>
</dbReference>
<dbReference type="GO" id="GO:0005886">
    <property type="term" value="C:plasma membrane"/>
    <property type="evidence" value="ECO:0007669"/>
    <property type="project" value="UniProtKB-SubCell"/>
</dbReference>
<dbReference type="GO" id="GO:0051991">
    <property type="term" value="F:UDP-N-acetyl-D-glucosamine:N-acetylmuramoyl-L-alanyl-D-glutamyl-meso-2,6-diaminopimelyl-D-alanyl-D-alanine-diphosphoundecaprenol 4-beta-N-acetylglucosaminlytransferase activity"/>
    <property type="evidence" value="ECO:0007669"/>
    <property type="project" value="RHEA"/>
</dbReference>
<dbReference type="GO" id="GO:0050511">
    <property type="term" value="F:undecaprenyldiphospho-muramoylpentapeptide beta-N-acetylglucosaminyltransferase activity"/>
    <property type="evidence" value="ECO:0007669"/>
    <property type="project" value="UniProtKB-UniRule"/>
</dbReference>
<dbReference type="GO" id="GO:0005975">
    <property type="term" value="P:carbohydrate metabolic process"/>
    <property type="evidence" value="ECO:0007669"/>
    <property type="project" value="InterPro"/>
</dbReference>
<dbReference type="GO" id="GO:0051301">
    <property type="term" value="P:cell division"/>
    <property type="evidence" value="ECO:0007669"/>
    <property type="project" value="UniProtKB-KW"/>
</dbReference>
<dbReference type="GO" id="GO:0071555">
    <property type="term" value="P:cell wall organization"/>
    <property type="evidence" value="ECO:0007669"/>
    <property type="project" value="UniProtKB-KW"/>
</dbReference>
<dbReference type="GO" id="GO:0030259">
    <property type="term" value="P:lipid glycosylation"/>
    <property type="evidence" value="ECO:0007669"/>
    <property type="project" value="UniProtKB-UniRule"/>
</dbReference>
<dbReference type="GO" id="GO:0009252">
    <property type="term" value="P:peptidoglycan biosynthetic process"/>
    <property type="evidence" value="ECO:0007669"/>
    <property type="project" value="UniProtKB-UniRule"/>
</dbReference>
<dbReference type="GO" id="GO:0008360">
    <property type="term" value="P:regulation of cell shape"/>
    <property type="evidence" value="ECO:0007669"/>
    <property type="project" value="UniProtKB-KW"/>
</dbReference>
<dbReference type="CDD" id="cd03785">
    <property type="entry name" value="GT28_MurG"/>
    <property type="match status" value="1"/>
</dbReference>
<dbReference type="Gene3D" id="3.40.50.2000">
    <property type="entry name" value="Glycogen Phosphorylase B"/>
    <property type="match status" value="2"/>
</dbReference>
<dbReference type="HAMAP" id="MF_00033">
    <property type="entry name" value="MurG"/>
    <property type="match status" value="1"/>
</dbReference>
<dbReference type="InterPro" id="IPR006009">
    <property type="entry name" value="GlcNAc_MurG"/>
</dbReference>
<dbReference type="InterPro" id="IPR007235">
    <property type="entry name" value="Glyco_trans_28_C"/>
</dbReference>
<dbReference type="InterPro" id="IPR004276">
    <property type="entry name" value="GlycoTrans_28_N"/>
</dbReference>
<dbReference type="NCBIfam" id="TIGR01133">
    <property type="entry name" value="murG"/>
    <property type="match status" value="1"/>
</dbReference>
<dbReference type="PANTHER" id="PTHR21015:SF22">
    <property type="entry name" value="GLYCOSYLTRANSFERASE"/>
    <property type="match status" value="1"/>
</dbReference>
<dbReference type="PANTHER" id="PTHR21015">
    <property type="entry name" value="UDP-N-ACETYLGLUCOSAMINE--N-ACETYLMURAMYL-(PENTAPEPTIDE) PYROPHOSPHORYL-UNDECAPRENOL N-ACETYLGLUCOSAMINE TRANSFERASE 1"/>
    <property type="match status" value="1"/>
</dbReference>
<dbReference type="Pfam" id="PF04101">
    <property type="entry name" value="Glyco_tran_28_C"/>
    <property type="match status" value="1"/>
</dbReference>
<dbReference type="Pfam" id="PF03033">
    <property type="entry name" value="Glyco_transf_28"/>
    <property type="match status" value="1"/>
</dbReference>
<dbReference type="SUPFAM" id="SSF53756">
    <property type="entry name" value="UDP-Glycosyltransferase/glycogen phosphorylase"/>
    <property type="match status" value="1"/>
</dbReference>
<accession>B0K3H0</accession>
<organism>
    <name type="scientific">Thermoanaerobacter sp. (strain X514)</name>
    <dbReference type="NCBI Taxonomy" id="399726"/>
    <lineage>
        <taxon>Bacteria</taxon>
        <taxon>Bacillati</taxon>
        <taxon>Bacillota</taxon>
        <taxon>Clostridia</taxon>
        <taxon>Thermoanaerobacterales</taxon>
        <taxon>Thermoanaerobacteraceae</taxon>
        <taxon>Thermoanaerobacter</taxon>
    </lineage>
</organism>